<sequence length="226" mass="26116">MKYNNILKGKFILRPNRFIAYVEIDGNEEVCHVKNTGRCKELLIPNATVFIQKNDNPKRKTKFSLIGVVKGDRMINMDSQVTNKVVHEWILKGNLLKDVTLIKPEAKYKNSRFDFYVETKHKKIFIEVKGVTLENNGIVKFPDAPTERGVKHLRELIDCIKEGYDAYVIFVIQMKEVVHFEPNVETHKEFGDTLKYAKENGVNIVAVDCLVDEDSINIRDYVDVIL</sequence>
<feature type="chain" id="PRO_0000340135" description="Sugar fermentation stimulation protein homolog">
    <location>
        <begin position="1"/>
        <end position="226"/>
    </location>
</feature>
<organism>
    <name type="scientific">Clostridium beijerinckii (strain ATCC 51743 / NCIMB 8052)</name>
    <name type="common">Clostridium acetobutylicum</name>
    <dbReference type="NCBI Taxonomy" id="290402"/>
    <lineage>
        <taxon>Bacteria</taxon>
        <taxon>Bacillati</taxon>
        <taxon>Bacillota</taxon>
        <taxon>Clostridia</taxon>
        <taxon>Eubacteriales</taxon>
        <taxon>Clostridiaceae</taxon>
        <taxon>Clostridium</taxon>
    </lineage>
</organism>
<comment type="similarity">
    <text evidence="1">Belongs to the SfsA family.</text>
</comment>
<accession>A6LQQ3</accession>
<reference key="1">
    <citation type="submission" date="2007-06" db="EMBL/GenBank/DDBJ databases">
        <title>Complete sequence of Clostridium beijerinckii NCIMB 8052.</title>
        <authorList>
            <consortium name="US DOE Joint Genome Institute"/>
            <person name="Copeland A."/>
            <person name="Lucas S."/>
            <person name="Lapidus A."/>
            <person name="Barry K."/>
            <person name="Detter J.C."/>
            <person name="Glavina del Rio T."/>
            <person name="Hammon N."/>
            <person name="Israni S."/>
            <person name="Dalin E."/>
            <person name="Tice H."/>
            <person name="Pitluck S."/>
            <person name="Sims D."/>
            <person name="Brettin T."/>
            <person name="Bruce D."/>
            <person name="Tapia R."/>
            <person name="Brainard J."/>
            <person name="Schmutz J."/>
            <person name="Larimer F."/>
            <person name="Land M."/>
            <person name="Hauser L."/>
            <person name="Kyrpides N."/>
            <person name="Mikhailova N."/>
            <person name="Bennet G."/>
            <person name="Cann I."/>
            <person name="Chen J.-S."/>
            <person name="Contreras A.L."/>
            <person name="Jones D."/>
            <person name="Kashket E."/>
            <person name="Mitchell W."/>
            <person name="Stoddard S."/>
            <person name="Schwarz W."/>
            <person name="Qureshi N."/>
            <person name="Young M."/>
            <person name="Shi Z."/>
            <person name="Ezeji T."/>
            <person name="White B."/>
            <person name="Blaschek H."/>
            <person name="Richardson P."/>
        </authorList>
    </citation>
    <scope>NUCLEOTIDE SEQUENCE [LARGE SCALE GENOMIC DNA]</scope>
    <source>
        <strain>ATCC 51743 / NCIMB 8052</strain>
    </source>
</reference>
<dbReference type="EMBL" id="CP000721">
    <property type="protein sequence ID" value="ABR32683.1"/>
    <property type="molecule type" value="Genomic_DNA"/>
</dbReference>
<dbReference type="RefSeq" id="WP_011967844.1">
    <property type="nucleotide sequence ID" value="NC_009617.1"/>
</dbReference>
<dbReference type="SMR" id="A6LQQ3"/>
<dbReference type="KEGG" id="cbe:Cbei_0495"/>
<dbReference type="eggNOG" id="COG1489">
    <property type="taxonomic scope" value="Bacteria"/>
</dbReference>
<dbReference type="HOGENOM" id="CLU_052299_1_0_9"/>
<dbReference type="Proteomes" id="UP000000565">
    <property type="component" value="Chromosome"/>
</dbReference>
<dbReference type="GO" id="GO:0003677">
    <property type="term" value="F:DNA binding"/>
    <property type="evidence" value="ECO:0007669"/>
    <property type="project" value="InterPro"/>
</dbReference>
<dbReference type="CDD" id="cd22359">
    <property type="entry name" value="SfsA-like_bacterial"/>
    <property type="match status" value="1"/>
</dbReference>
<dbReference type="Gene3D" id="2.40.50.580">
    <property type="match status" value="1"/>
</dbReference>
<dbReference type="Gene3D" id="3.40.1350.60">
    <property type="match status" value="1"/>
</dbReference>
<dbReference type="HAMAP" id="MF_00095">
    <property type="entry name" value="SfsA"/>
    <property type="match status" value="1"/>
</dbReference>
<dbReference type="InterPro" id="IPR005224">
    <property type="entry name" value="SfsA"/>
</dbReference>
<dbReference type="InterPro" id="IPR040452">
    <property type="entry name" value="SfsA_C"/>
</dbReference>
<dbReference type="InterPro" id="IPR041465">
    <property type="entry name" value="SfsA_N"/>
</dbReference>
<dbReference type="NCBIfam" id="TIGR00230">
    <property type="entry name" value="sfsA"/>
    <property type="match status" value="1"/>
</dbReference>
<dbReference type="PANTHER" id="PTHR30545">
    <property type="entry name" value="SUGAR FERMENTATION STIMULATION PROTEIN A"/>
    <property type="match status" value="1"/>
</dbReference>
<dbReference type="PANTHER" id="PTHR30545:SF2">
    <property type="entry name" value="SUGAR FERMENTATION STIMULATION PROTEIN A"/>
    <property type="match status" value="1"/>
</dbReference>
<dbReference type="Pfam" id="PF03749">
    <property type="entry name" value="SfsA"/>
    <property type="match status" value="1"/>
</dbReference>
<dbReference type="Pfam" id="PF17746">
    <property type="entry name" value="SfsA_N"/>
    <property type="match status" value="1"/>
</dbReference>
<protein>
    <recommendedName>
        <fullName evidence="1">Sugar fermentation stimulation protein homolog</fullName>
    </recommendedName>
</protein>
<proteinExistence type="inferred from homology"/>
<evidence type="ECO:0000255" key="1">
    <source>
        <dbReference type="HAMAP-Rule" id="MF_00095"/>
    </source>
</evidence>
<name>SFSA_CLOB8</name>
<gene>
    <name evidence="1" type="primary">sfsA</name>
    <name type="ordered locus">Cbei_0495</name>
</gene>